<keyword id="KW-0002">3D-structure</keyword>
<keyword id="KW-0238">DNA-binding</keyword>
<keyword id="KW-0479">Metal-binding</keyword>
<keyword id="KW-0678">Repressor</keyword>
<keyword id="KW-0804">Transcription</keyword>
<keyword id="KW-0805">Transcription regulation</keyword>
<keyword id="KW-0862">Zinc</keyword>
<keyword id="KW-0863">Zinc-finger</keyword>
<accession>Q04152</accession>
<protein>
    <recommendedName>
        <fullName>Transcriptional regulatory protein ros</fullName>
    </recommendedName>
</protein>
<feature type="chain" id="PRO_0000168172" description="Transcriptional regulatory protein ros">
    <location>
        <begin position="1"/>
        <end position="142"/>
    </location>
</feature>
<feature type="zinc finger region" description="C2H3-type">
    <location>
        <begin position="79"/>
        <end position="97"/>
    </location>
</feature>
<feature type="strand" evidence="2">
    <location>
        <begin position="85"/>
        <end position="88"/>
    </location>
</feature>
<feature type="helix" evidence="2">
    <location>
        <begin position="89"/>
        <end position="95"/>
    </location>
</feature>
<feature type="helix" evidence="2">
    <location>
        <begin position="101"/>
        <end position="107"/>
    </location>
</feature>
<feature type="helix" evidence="2">
    <location>
        <begin position="111"/>
        <end position="113"/>
    </location>
</feature>
<feature type="turn" evidence="2">
    <location>
        <begin position="119"/>
        <end position="127"/>
    </location>
</feature>
<comment type="function">
    <text>Specifically represses the virC and virD operons in the virulence region of the Ti plasmid.</text>
</comment>
<comment type="similarity">
    <text evidence="1">Belongs to the ros/MucR family.</text>
</comment>
<gene>
    <name type="primary">ros</name>
</gene>
<reference key="1">
    <citation type="journal article" date="1991" name="J. Bacteriol.">
        <title>The virC and virD operons of the Agrobacterium Ti plasmid are regulated by the ros chromosomal gene: analysis of the cloned ros gene.</title>
        <authorList>
            <person name="Cooley M.B."/>
            <person name="D'Souza M.R."/>
            <person name="Kado C.I."/>
        </authorList>
    </citation>
    <scope>NUCLEOTIDE SEQUENCE [GENOMIC DNA]</scope>
</reference>
<dbReference type="EMBL" id="M65201">
    <property type="protein sequence ID" value="AAA22106.1"/>
    <property type="molecule type" value="Genomic_DNA"/>
</dbReference>
<dbReference type="PIR" id="A42729">
    <property type="entry name" value="A42729"/>
</dbReference>
<dbReference type="RefSeq" id="WP_003512037.1">
    <property type="nucleotide sequence ID" value="NZ_WJOK01000012.1"/>
</dbReference>
<dbReference type="PDB" id="2JSP">
    <property type="method" value="NMR"/>
    <property type="chains" value="A=56-142"/>
</dbReference>
<dbReference type="PDBsum" id="2JSP"/>
<dbReference type="BMRB" id="Q04152"/>
<dbReference type="SMR" id="Q04152"/>
<dbReference type="GeneID" id="92770071"/>
<dbReference type="eggNOG" id="COG4957">
    <property type="taxonomic scope" value="Bacteria"/>
</dbReference>
<dbReference type="OrthoDB" id="9809693at2"/>
<dbReference type="EvolutionaryTrace" id="Q04152"/>
<dbReference type="GO" id="GO:0003677">
    <property type="term" value="F:DNA binding"/>
    <property type="evidence" value="ECO:0007669"/>
    <property type="project" value="UniProtKB-KW"/>
</dbReference>
<dbReference type="GO" id="GO:0008270">
    <property type="term" value="F:zinc ion binding"/>
    <property type="evidence" value="ECO:0007669"/>
    <property type="project" value="UniProtKB-KW"/>
</dbReference>
<dbReference type="GO" id="GO:0006355">
    <property type="term" value="P:regulation of DNA-templated transcription"/>
    <property type="evidence" value="ECO:0007669"/>
    <property type="project" value="InterPro"/>
</dbReference>
<dbReference type="Gene3D" id="1.10.10.1550">
    <property type="entry name" value="ROS/MUCR transcriptional regulator protein"/>
    <property type="match status" value="1"/>
</dbReference>
<dbReference type="InterPro" id="IPR041920">
    <property type="entry name" value="ROS/MUCR_sf"/>
</dbReference>
<dbReference type="InterPro" id="IPR008807">
    <property type="entry name" value="ROS_MUCR"/>
</dbReference>
<dbReference type="Pfam" id="PF05443">
    <property type="entry name" value="ROS_MUCR"/>
    <property type="match status" value="1"/>
</dbReference>
<sequence>MTETAYGNAQDLLVELTADIVAAYVSNHVVPVTELPGLISDVHTALSGTSAPASVAVNVEKQKPAVSVRKSVQDDHIVCLECGGSFKSLKRHLTTHHSMTPEEYREKWDLPVDYPMVAPAYAEARSRLAKEMGLGQRRKANR</sequence>
<name>ROS_RHIRD</name>
<evidence type="ECO:0000305" key="1"/>
<evidence type="ECO:0007829" key="2">
    <source>
        <dbReference type="PDB" id="2JSP"/>
    </source>
</evidence>
<organism>
    <name type="scientific">Rhizobium radiobacter</name>
    <name type="common">Agrobacterium tumefaciens</name>
    <name type="synonym">Agrobacterium radiobacter</name>
    <dbReference type="NCBI Taxonomy" id="358"/>
    <lineage>
        <taxon>Bacteria</taxon>
        <taxon>Pseudomonadati</taxon>
        <taxon>Pseudomonadota</taxon>
        <taxon>Alphaproteobacteria</taxon>
        <taxon>Hyphomicrobiales</taxon>
        <taxon>Rhizobiaceae</taxon>
        <taxon>Rhizobium/Agrobacterium group</taxon>
        <taxon>Agrobacterium</taxon>
        <taxon>Agrobacterium tumefaciens complex</taxon>
    </lineage>
</organism>
<proteinExistence type="evidence at protein level"/>